<comment type="similarity">
    <text evidence="2">Belongs to the eukaryotic ribosomal protein eL28 family.</text>
</comment>
<keyword id="KW-0002">3D-structure</keyword>
<keyword id="KW-0687">Ribonucleoprotein</keyword>
<keyword id="KW-0689">Ribosomal protein</keyword>
<name>RL28_TRYCR</name>
<dbReference type="EMBL" id="AB003067">
    <property type="protein sequence ID" value="BAA22425.1"/>
    <property type="molecule type" value="mRNA"/>
</dbReference>
<dbReference type="RefSeq" id="XP_820211.1">
    <property type="nucleotide sequence ID" value="XM_815118.1"/>
</dbReference>
<dbReference type="PDB" id="5T5H">
    <property type="method" value="EM"/>
    <property type="resolution" value="2.54 A"/>
    <property type="chains" value="c=4-128"/>
</dbReference>
<dbReference type="PDBsum" id="5T5H"/>
<dbReference type="EMDB" id="EMD-8361"/>
<dbReference type="SMR" id="O00822"/>
<dbReference type="IntAct" id="O00822">
    <property type="interactions" value="1"/>
</dbReference>
<dbReference type="GeneID" id="3552838"/>
<dbReference type="KEGG" id="tcr:506297.270"/>
<dbReference type="VEuPathDB" id="TriTrypDB:BCY84_13052"/>
<dbReference type="VEuPathDB" id="TriTrypDB:C3747_44g416c"/>
<dbReference type="VEuPathDB" id="TriTrypDB:C4B63_12g1344c"/>
<dbReference type="VEuPathDB" id="TriTrypDB:TcBrA4_0090550"/>
<dbReference type="VEuPathDB" id="TriTrypDB:TcCL_NonESM02162"/>
<dbReference type="VEuPathDB" id="TriTrypDB:TcCLB.506297.270"/>
<dbReference type="VEuPathDB" id="TriTrypDB:TcCLB.510101.30"/>
<dbReference type="VEuPathDB" id="TriTrypDB:TcG_01898"/>
<dbReference type="VEuPathDB" id="TriTrypDB:TcYC6_0043200"/>
<dbReference type="OMA" id="FNNNGSW"/>
<dbReference type="OrthoDB" id="245878at2759"/>
<dbReference type="GO" id="GO:1990904">
    <property type="term" value="C:ribonucleoprotein complex"/>
    <property type="evidence" value="ECO:0007669"/>
    <property type="project" value="UniProtKB-KW"/>
</dbReference>
<dbReference type="GO" id="GO:0005840">
    <property type="term" value="C:ribosome"/>
    <property type="evidence" value="ECO:0007669"/>
    <property type="project" value="UniProtKB-KW"/>
</dbReference>
<dbReference type="GO" id="GO:0003735">
    <property type="term" value="F:structural constituent of ribosome"/>
    <property type="evidence" value="ECO:0007669"/>
    <property type="project" value="InterPro"/>
</dbReference>
<dbReference type="GO" id="GO:0006412">
    <property type="term" value="P:translation"/>
    <property type="evidence" value="ECO:0007669"/>
    <property type="project" value="InterPro"/>
</dbReference>
<dbReference type="FunFam" id="3.30.390.110:FF:000007">
    <property type="entry name" value="60S ribosomal protein L28"/>
    <property type="match status" value="1"/>
</dbReference>
<dbReference type="Gene3D" id="3.30.390.110">
    <property type="match status" value="1"/>
</dbReference>
<dbReference type="InterPro" id="IPR002672">
    <property type="entry name" value="Ribosomal_eL28"/>
</dbReference>
<dbReference type="InterPro" id="IPR029004">
    <property type="entry name" value="Ribosomal_eL28/Mak16"/>
</dbReference>
<dbReference type="PANTHER" id="PTHR10544">
    <property type="entry name" value="60S RIBOSOMAL PROTEIN L28"/>
    <property type="match status" value="1"/>
</dbReference>
<dbReference type="Pfam" id="PF01778">
    <property type="entry name" value="Ribosomal_L28e"/>
    <property type="match status" value="1"/>
</dbReference>
<feature type="chain" id="PRO_0000122397" description="Large ribosomal subunit protein eL28">
    <location>
        <begin position="1"/>
        <end position="146"/>
    </location>
</feature>
<feature type="region of interest" description="Disordered" evidence="1">
    <location>
        <begin position="123"/>
        <end position="146"/>
    </location>
</feature>
<reference key="1">
    <citation type="submission" date="1997-04" db="EMBL/GenBank/DDBJ databases">
        <authorList>
            <person name="Tanaka T."/>
            <person name="Tanaka M."/>
        </authorList>
    </citation>
    <scope>NUCLEOTIDE SEQUENCE [MRNA]</scope>
    <source>
        <strain>Y</strain>
    </source>
</reference>
<sequence>MTHSTDLQWLLVRQNSKFLQKRNGIRLSSDPFNNNANWTKRHAGFLNTKAAVVKTKGDRILVTTKDGKAGNKPKSMYKKAVMDAGVEASVVSKAVAAVRPDLASIASRRARKMASTLEHMKKVRAARKERSSKITFQRKAVRPKRH</sequence>
<evidence type="ECO:0000256" key="1">
    <source>
        <dbReference type="SAM" id="MobiDB-lite"/>
    </source>
</evidence>
<evidence type="ECO:0000305" key="2"/>
<protein>
    <recommendedName>
        <fullName evidence="2">Large ribosomal subunit protein eL28</fullName>
    </recommendedName>
    <alternativeName>
        <fullName>60S ribosomal protein L28</fullName>
    </alternativeName>
</protein>
<accession>O00822</accession>
<proteinExistence type="evidence at protein level"/>
<organism>
    <name type="scientific">Trypanosoma cruzi</name>
    <dbReference type="NCBI Taxonomy" id="5693"/>
    <lineage>
        <taxon>Eukaryota</taxon>
        <taxon>Discoba</taxon>
        <taxon>Euglenozoa</taxon>
        <taxon>Kinetoplastea</taxon>
        <taxon>Metakinetoplastina</taxon>
        <taxon>Trypanosomatida</taxon>
        <taxon>Trypanosomatidae</taxon>
        <taxon>Trypanosoma</taxon>
        <taxon>Schizotrypanum</taxon>
    </lineage>
</organism>